<name>Y1283_ROSCS</name>
<dbReference type="EMBL" id="CP000804">
    <property type="protein sequence ID" value="ABU57380.1"/>
    <property type="molecule type" value="Genomic_DNA"/>
</dbReference>
<dbReference type="RefSeq" id="WP_012119810.1">
    <property type="nucleotide sequence ID" value="NC_009767.1"/>
</dbReference>
<dbReference type="SMR" id="A7NIS7"/>
<dbReference type="STRING" id="383372.Rcas_1283"/>
<dbReference type="KEGG" id="rca:Rcas_1283"/>
<dbReference type="eggNOG" id="COG1666">
    <property type="taxonomic scope" value="Bacteria"/>
</dbReference>
<dbReference type="HOGENOM" id="CLU_099839_0_0_0"/>
<dbReference type="OrthoDB" id="9801447at2"/>
<dbReference type="Proteomes" id="UP000000263">
    <property type="component" value="Chromosome"/>
</dbReference>
<dbReference type="GO" id="GO:0005829">
    <property type="term" value="C:cytosol"/>
    <property type="evidence" value="ECO:0007669"/>
    <property type="project" value="TreeGrafter"/>
</dbReference>
<dbReference type="GO" id="GO:0000166">
    <property type="term" value="F:nucleotide binding"/>
    <property type="evidence" value="ECO:0007669"/>
    <property type="project" value="TreeGrafter"/>
</dbReference>
<dbReference type="CDD" id="cd11740">
    <property type="entry name" value="YajQ_like"/>
    <property type="match status" value="1"/>
</dbReference>
<dbReference type="Gene3D" id="3.30.70.860">
    <property type="match status" value="1"/>
</dbReference>
<dbReference type="Gene3D" id="3.30.70.990">
    <property type="entry name" value="YajQ-like, domain 2"/>
    <property type="match status" value="1"/>
</dbReference>
<dbReference type="HAMAP" id="MF_00632">
    <property type="entry name" value="YajQ"/>
    <property type="match status" value="1"/>
</dbReference>
<dbReference type="InterPro" id="IPR007551">
    <property type="entry name" value="DUF520"/>
</dbReference>
<dbReference type="InterPro" id="IPR035571">
    <property type="entry name" value="UPF0234-like_C"/>
</dbReference>
<dbReference type="InterPro" id="IPR035570">
    <property type="entry name" value="UPF0234_N"/>
</dbReference>
<dbReference type="InterPro" id="IPR036183">
    <property type="entry name" value="YajQ-like_sf"/>
</dbReference>
<dbReference type="NCBIfam" id="NF003819">
    <property type="entry name" value="PRK05412.1"/>
    <property type="match status" value="1"/>
</dbReference>
<dbReference type="PANTHER" id="PTHR30476">
    <property type="entry name" value="UPF0234 PROTEIN YAJQ"/>
    <property type="match status" value="1"/>
</dbReference>
<dbReference type="PANTHER" id="PTHR30476:SF0">
    <property type="entry name" value="UPF0234 PROTEIN YAJQ"/>
    <property type="match status" value="1"/>
</dbReference>
<dbReference type="Pfam" id="PF04461">
    <property type="entry name" value="DUF520"/>
    <property type="match status" value="1"/>
</dbReference>
<dbReference type="SUPFAM" id="SSF89963">
    <property type="entry name" value="YajQ-like"/>
    <property type="match status" value="2"/>
</dbReference>
<evidence type="ECO:0000255" key="1">
    <source>
        <dbReference type="HAMAP-Rule" id="MF_00632"/>
    </source>
</evidence>
<accession>A7NIS7</accession>
<keyword id="KW-0547">Nucleotide-binding</keyword>
<keyword id="KW-1185">Reference proteome</keyword>
<organism>
    <name type="scientific">Roseiflexus castenholzii (strain DSM 13941 / HLO8)</name>
    <dbReference type="NCBI Taxonomy" id="383372"/>
    <lineage>
        <taxon>Bacteria</taxon>
        <taxon>Bacillati</taxon>
        <taxon>Chloroflexota</taxon>
        <taxon>Chloroflexia</taxon>
        <taxon>Chloroflexales</taxon>
        <taxon>Roseiflexineae</taxon>
        <taxon>Roseiflexaceae</taxon>
        <taxon>Roseiflexus</taxon>
    </lineage>
</organism>
<comment type="function">
    <text evidence="1">Nucleotide-binding protein.</text>
</comment>
<comment type="similarity">
    <text evidence="1">Belongs to the YajQ family.</text>
</comment>
<protein>
    <recommendedName>
        <fullName evidence="1">Nucleotide-binding protein Rcas_1283</fullName>
    </recommendedName>
</protein>
<feature type="chain" id="PRO_1000147322" description="Nucleotide-binding protein Rcas_1283">
    <location>
        <begin position="1"/>
        <end position="165"/>
    </location>
</feature>
<gene>
    <name type="ordered locus">Rcas_1283</name>
</gene>
<reference key="1">
    <citation type="submission" date="2007-08" db="EMBL/GenBank/DDBJ databases">
        <title>Complete sequence of Roseiflexus castenholzii DSM 13941.</title>
        <authorList>
            <consortium name="US DOE Joint Genome Institute"/>
            <person name="Copeland A."/>
            <person name="Lucas S."/>
            <person name="Lapidus A."/>
            <person name="Barry K."/>
            <person name="Glavina del Rio T."/>
            <person name="Dalin E."/>
            <person name="Tice H."/>
            <person name="Pitluck S."/>
            <person name="Thompson L.S."/>
            <person name="Brettin T."/>
            <person name="Bruce D."/>
            <person name="Detter J.C."/>
            <person name="Han C."/>
            <person name="Tapia R."/>
            <person name="Schmutz J."/>
            <person name="Larimer F."/>
            <person name="Land M."/>
            <person name="Hauser L."/>
            <person name="Kyrpides N."/>
            <person name="Mikhailova N."/>
            <person name="Bryant D.A."/>
            <person name="Hanada S."/>
            <person name="Tsukatani Y."/>
            <person name="Richardson P."/>
        </authorList>
    </citation>
    <scope>NUCLEOTIDE SEQUENCE [LARGE SCALE GENOMIC DNA]</scope>
    <source>
        <strain>DSM 13941 / HLO8</strain>
    </source>
</reference>
<proteinExistence type="inferred from homology"/>
<sequence>MPAESTFDIVSDFERQELVNAIDQARREVATRYDLKDTKTEIVLSEKELTITTESEMHLAAVRDLVQTKALRRNLSIKIFKFGPVQEVSGGRVRQVATLQRGIPEDVAKKLAKLIRDHFPKVQPRIQGDALRVGSKSRDELQAVIRLVKERQDEFDIPLQFTNYR</sequence>